<protein>
    <recommendedName>
        <fullName>Biglycan</fullName>
    </recommendedName>
    <alternativeName>
        <fullName>Bone/cartilage proteoglycan I</fullName>
    </alternativeName>
    <alternativeName>
        <fullName>PG-S1</fullName>
    </alternativeName>
</protein>
<organism>
    <name type="scientific">Equus caballus</name>
    <name type="common">Horse</name>
    <dbReference type="NCBI Taxonomy" id="9796"/>
    <lineage>
        <taxon>Eukaryota</taxon>
        <taxon>Metazoa</taxon>
        <taxon>Chordata</taxon>
        <taxon>Craniata</taxon>
        <taxon>Vertebrata</taxon>
        <taxon>Euteleostomi</taxon>
        <taxon>Mammalia</taxon>
        <taxon>Eutheria</taxon>
        <taxon>Laurasiatheria</taxon>
        <taxon>Perissodactyla</taxon>
        <taxon>Equidae</taxon>
        <taxon>Equus</taxon>
    </lineage>
</organism>
<accession>O46403</accession>
<accession>Q9N1U5</accession>
<keyword id="KW-1015">Disulfide bond</keyword>
<keyword id="KW-0272">Extracellular matrix</keyword>
<keyword id="KW-0325">Glycoprotein</keyword>
<keyword id="KW-0433">Leucine-rich repeat</keyword>
<keyword id="KW-0654">Proteoglycan</keyword>
<keyword id="KW-1185">Reference proteome</keyword>
<keyword id="KW-0677">Repeat</keyword>
<keyword id="KW-0964">Secreted</keyword>
<keyword id="KW-0732">Signal</keyword>
<name>PGS1_HORSE</name>
<gene>
    <name type="primary">BGN</name>
</gene>
<evidence type="ECO:0000250" key="1"/>
<evidence type="ECO:0000250" key="2">
    <source>
        <dbReference type="UniProtKB" id="P21810"/>
    </source>
</evidence>
<evidence type="ECO:0000250" key="3">
    <source>
        <dbReference type="UniProtKB" id="P47853"/>
    </source>
</evidence>
<evidence type="ECO:0000255" key="4"/>
<evidence type="ECO:0000305" key="5"/>
<reference key="1">
    <citation type="submission" date="1997-11" db="EMBL/GenBank/DDBJ databases">
        <title>Dose dependent effects of corticosteroids on the expression of matrix related genes in equine articular chondrocytes.</title>
        <authorList>
            <person name="Richardson D.W."/>
            <person name="Dodge G.R."/>
        </authorList>
    </citation>
    <scope>NUCLEOTIDE SEQUENCE [MRNA]</scope>
</reference>
<reference key="2">
    <citation type="journal article" date="1999" name="Genome Res.">
        <title>A comparative gene map of the horse (Equus caballus).</title>
        <authorList>
            <person name="Caetano A.R."/>
            <person name="Shiue Y.L."/>
            <person name="Lyons L.A."/>
            <person name="O'Brien S.J."/>
            <person name="Laughlin T.F."/>
            <person name="Bowling A.T."/>
            <person name="Murray J.D."/>
        </authorList>
    </citation>
    <scope>NUCLEOTIDE SEQUENCE [GENOMIC DNA] OF 150-192</scope>
</reference>
<proteinExistence type="evidence at transcript level"/>
<dbReference type="EMBL" id="AF035934">
    <property type="protein sequence ID" value="AAB88305.1"/>
    <property type="molecule type" value="mRNA"/>
</dbReference>
<dbReference type="EMBL" id="AF135020">
    <property type="protein sequence ID" value="AAF64248.1"/>
    <property type="molecule type" value="Genomic_DNA"/>
</dbReference>
<dbReference type="RefSeq" id="NP_001075308.1">
    <property type="nucleotide sequence ID" value="NM_001081839.3"/>
</dbReference>
<dbReference type="RefSeq" id="XP_023488943.1">
    <property type="nucleotide sequence ID" value="XM_023633175.2"/>
</dbReference>
<dbReference type="SMR" id="O46403"/>
<dbReference type="FunCoup" id="O46403">
    <property type="interactions" value="281"/>
</dbReference>
<dbReference type="STRING" id="9796.ENSECAP00000041347"/>
<dbReference type="GlyCosmos" id="O46403">
    <property type="glycosylation" value="4 sites, No reported glycans"/>
</dbReference>
<dbReference type="PaxDb" id="9796-ENSECAP00000041347"/>
<dbReference type="PeptideAtlas" id="O46403"/>
<dbReference type="Ensembl" id="ENSECAT00000036490.3">
    <property type="protein sequence ID" value="ENSECAP00000036049.1"/>
    <property type="gene ID" value="ENSECAG00000018717.4"/>
</dbReference>
<dbReference type="GeneID" id="100033879"/>
<dbReference type="KEGG" id="ecb:100033879"/>
<dbReference type="CTD" id="633"/>
<dbReference type="VGNC" id="VGNC:15820">
    <property type="gene designation" value="BGN"/>
</dbReference>
<dbReference type="GeneTree" id="ENSGT00940000155311"/>
<dbReference type="HOGENOM" id="CLU_000288_186_0_1"/>
<dbReference type="InParanoid" id="O46403"/>
<dbReference type="OrthoDB" id="1111193at2759"/>
<dbReference type="TreeFam" id="TF334562"/>
<dbReference type="Proteomes" id="UP000002281">
    <property type="component" value="Chromosome X"/>
</dbReference>
<dbReference type="Bgee" id="ENSECAG00000018717">
    <property type="expression patterns" value="Expressed in articular cartilage of joint and 20 other cell types or tissues"/>
</dbReference>
<dbReference type="ExpressionAtlas" id="O46403">
    <property type="expression patterns" value="baseline"/>
</dbReference>
<dbReference type="GO" id="GO:0005615">
    <property type="term" value="C:extracellular space"/>
    <property type="evidence" value="ECO:0000318"/>
    <property type="project" value="GO_Central"/>
</dbReference>
<dbReference type="FunFam" id="3.80.10.10:FF:000038">
    <property type="entry name" value="Biglycan"/>
    <property type="match status" value="1"/>
</dbReference>
<dbReference type="Gene3D" id="3.80.10.10">
    <property type="entry name" value="Ribonuclease Inhibitor"/>
    <property type="match status" value="1"/>
</dbReference>
<dbReference type="InterPro" id="IPR001611">
    <property type="entry name" value="Leu-rich_rpt"/>
</dbReference>
<dbReference type="InterPro" id="IPR003591">
    <property type="entry name" value="Leu-rich_rpt_typical-subtyp"/>
</dbReference>
<dbReference type="InterPro" id="IPR032675">
    <property type="entry name" value="LRR_dom_sf"/>
</dbReference>
<dbReference type="InterPro" id="IPR000372">
    <property type="entry name" value="LRRNT"/>
</dbReference>
<dbReference type="InterPro" id="IPR050333">
    <property type="entry name" value="SLRP"/>
</dbReference>
<dbReference type="InterPro" id="IPR016352">
    <property type="entry name" value="SLRP_I_decor/aspor/byglycan"/>
</dbReference>
<dbReference type="PANTHER" id="PTHR45712">
    <property type="entry name" value="AGAP008170-PA"/>
    <property type="match status" value="1"/>
</dbReference>
<dbReference type="PANTHER" id="PTHR45712:SF11">
    <property type="entry name" value="BIGLYCAN"/>
    <property type="match status" value="1"/>
</dbReference>
<dbReference type="Pfam" id="PF13855">
    <property type="entry name" value="LRR_8"/>
    <property type="match status" value="3"/>
</dbReference>
<dbReference type="Pfam" id="PF01462">
    <property type="entry name" value="LRRNT"/>
    <property type="match status" value="1"/>
</dbReference>
<dbReference type="PIRSF" id="PIRSF002490">
    <property type="entry name" value="SLRP_I"/>
    <property type="match status" value="1"/>
</dbReference>
<dbReference type="SMART" id="SM00364">
    <property type="entry name" value="LRR_BAC"/>
    <property type="match status" value="3"/>
</dbReference>
<dbReference type="SMART" id="SM00369">
    <property type="entry name" value="LRR_TYP"/>
    <property type="match status" value="8"/>
</dbReference>
<dbReference type="SMART" id="SM00013">
    <property type="entry name" value="LRRNT"/>
    <property type="match status" value="1"/>
</dbReference>
<dbReference type="SUPFAM" id="SSF52058">
    <property type="entry name" value="L domain-like"/>
    <property type="match status" value="1"/>
</dbReference>
<dbReference type="PROSITE" id="PS51450">
    <property type="entry name" value="LRR"/>
    <property type="match status" value="8"/>
</dbReference>
<comment type="function">
    <text evidence="1">May be involved in collagen fiber assembly.</text>
</comment>
<comment type="subunit">
    <text evidence="1">Homodimer. Forms a ternary complex with MFAP2 and ELN (By similarity).</text>
</comment>
<comment type="subcellular location">
    <subcellularLocation>
        <location evidence="1">Secreted</location>
        <location evidence="1">Extracellular space</location>
        <location evidence="1">Extracellular matrix</location>
    </subcellularLocation>
</comment>
<comment type="PTM">
    <text evidence="1">The two attached glycosaminoglycan chains can be either chondroitin sulfate or dermatan sulfate.</text>
</comment>
<comment type="similarity">
    <text evidence="5">Belongs to the small leucine-rich proteoglycan (SLRP) family. SLRP class I subfamily.</text>
</comment>
<feature type="signal peptide" evidence="3">
    <location>
        <begin position="1"/>
        <end position="19"/>
    </location>
</feature>
<feature type="propeptide" id="PRO_0000032689" evidence="2">
    <location>
        <begin position="20"/>
        <end position="40"/>
    </location>
</feature>
<feature type="chain" id="PRO_0000032690" description="Biglycan">
    <location>
        <begin position="41"/>
        <end position="372"/>
    </location>
</feature>
<feature type="repeat" description="LRR 1">
    <location>
        <begin position="86"/>
        <end position="106"/>
    </location>
</feature>
<feature type="repeat" description="LRR 2">
    <location>
        <begin position="107"/>
        <end position="130"/>
    </location>
</feature>
<feature type="repeat" description="LRR 3">
    <location>
        <begin position="131"/>
        <end position="154"/>
    </location>
</feature>
<feature type="repeat" description="LRR 4">
    <location>
        <begin position="155"/>
        <end position="175"/>
    </location>
</feature>
<feature type="repeat" description="LRR 5">
    <location>
        <begin position="176"/>
        <end position="199"/>
    </location>
</feature>
<feature type="repeat" description="LRR 6">
    <location>
        <begin position="200"/>
        <end position="224"/>
    </location>
</feature>
<feature type="repeat" description="LRR 7">
    <location>
        <begin position="225"/>
        <end position="245"/>
    </location>
</feature>
<feature type="repeat" description="LRR 8">
    <location>
        <begin position="246"/>
        <end position="269"/>
    </location>
</feature>
<feature type="repeat" description="LRR 9">
    <location>
        <begin position="270"/>
        <end position="293"/>
    </location>
</feature>
<feature type="repeat" description="LRR 10">
    <location>
        <begin position="294"/>
        <end position="316"/>
    </location>
</feature>
<feature type="repeat" description="LRR 11">
    <location>
        <begin position="317"/>
        <end position="346"/>
    </location>
</feature>
<feature type="repeat" description="LRR 12">
    <location>
        <begin position="347"/>
        <end position="372"/>
    </location>
</feature>
<feature type="glycosylation site" description="O-linked (Xyl...) (glycosaminoglycan) serine" evidence="2">
    <location>
        <position position="45"/>
    </location>
</feature>
<feature type="glycosylation site" description="O-linked (Xyl...) (glycosaminoglycan) serine" evidence="2">
    <location>
        <position position="51"/>
    </location>
</feature>
<feature type="glycosylation site" description="N-linked (GlcNAc...) asparagine" evidence="4">
    <location>
        <position position="274"/>
    </location>
</feature>
<feature type="glycosylation site" description="N-linked (GlcNAc...) asparagine" evidence="4">
    <location>
        <position position="315"/>
    </location>
</feature>
<feature type="disulfide bond" evidence="1">
    <location>
        <begin position="67"/>
        <end position="73"/>
    </location>
</feature>
<feature type="disulfide bond" evidence="1">
    <location>
        <begin position="71"/>
        <end position="80"/>
    </location>
</feature>
<feature type="disulfide bond" evidence="1">
    <location>
        <begin position="325"/>
        <end position="358"/>
    </location>
</feature>
<sequence>MPTMWPLWLLASLLALSQALPFEQKGFWDFTLDDGLPMLNDEEASGADTTSGIPDLDSLTPTFSAMCPFGCHCHLRVVQCSDLGLKAVPKEISPDTTLLDLQNNEISELRKDDFKGLQHLYALVLVNNKISKIHEKAFSPLRKLQKLYISKNHLVEIPPNLPSSLVELRIHDNRIRKVPKGVFSGLRNMNCIEMGGNPLENSGFQPGAFDGLKLNYLRISEAKLTGIPKDLPETLNELHLDHNKIQAIELEDLLRYSKLYRLGLGHNQIRMIENGSLSFLPTLRELHLDNNKLSRVPAGLPDLKLLQVVYLHTNNITKVGVNDFCPVGFGVKRAYYNGISLFNNPVPYWEVQPATFRCVTDRLAIQFGNYKK</sequence>